<dbReference type="EMBL" id="AF539794">
    <property type="protein sequence ID" value="AAO13384.1"/>
    <property type="molecule type" value="mRNA"/>
</dbReference>
<dbReference type="EMBL" id="BC101062">
    <property type="protein sequence ID" value="AAI01063.1"/>
    <property type="molecule type" value="mRNA"/>
</dbReference>
<dbReference type="EMBL" id="BC101063">
    <property type="protein sequence ID" value="AAI01064.1"/>
    <property type="molecule type" value="mRNA"/>
</dbReference>
<dbReference type="CCDS" id="CCDS11292.1">
    <molecule id="Q8IWX7-1"/>
</dbReference>
<dbReference type="CCDS" id="CCDS45648.1">
    <molecule id="Q8IWX7-3"/>
</dbReference>
<dbReference type="CCDS" id="CCDS76993.1">
    <molecule id="Q8IWX7-2"/>
</dbReference>
<dbReference type="RefSeq" id="NP_001028748.1">
    <molecule id="Q8IWX7-3"/>
    <property type="nucleotide sequence ID" value="NM_001033576.2"/>
</dbReference>
<dbReference type="RefSeq" id="NP_001253981.1">
    <molecule id="Q8IWX7-3"/>
    <property type="nucleotide sequence ID" value="NM_001267052.2"/>
</dbReference>
<dbReference type="RefSeq" id="NP_001295210.1">
    <molecule id="Q8IWX7-2"/>
    <property type="nucleotide sequence ID" value="NM_001308281.1"/>
</dbReference>
<dbReference type="RefSeq" id="NP_775259.1">
    <molecule id="Q8IWX7-1"/>
    <property type="nucleotide sequence ID" value="NM_173167.3"/>
</dbReference>
<dbReference type="RefSeq" id="XP_016879723.1">
    <molecule id="Q8IWX7-2"/>
    <property type="nucleotide sequence ID" value="XM_017024234.2"/>
</dbReference>
<dbReference type="RefSeq" id="XP_054171183.1">
    <molecule id="Q8IWX7-2"/>
    <property type="nucleotide sequence ID" value="XM_054315208.1"/>
</dbReference>
<dbReference type="SMR" id="Q8IWX7"/>
<dbReference type="BioGRID" id="127021">
    <property type="interactions" value="22"/>
</dbReference>
<dbReference type="FunCoup" id="Q8IWX7">
    <property type="interactions" value="292"/>
</dbReference>
<dbReference type="IntAct" id="Q8IWX7">
    <property type="interactions" value="24"/>
</dbReference>
<dbReference type="MINT" id="Q8IWX7"/>
<dbReference type="STRING" id="9606.ENSP00000268876"/>
<dbReference type="iPTMnet" id="Q8IWX7"/>
<dbReference type="PhosphoSitePlus" id="Q8IWX7"/>
<dbReference type="SwissPalm" id="Q8IWX7"/>
<dbReference type="BioMuta" id="UNC45B"/>
<dbReference type="DMDM" id="74762485"/>
<dbReference type="jPOST" id="Q8IWX7"/>
<dbReference type="MassIVE" id="Q8IWX7"/>
<dbReference type="PaxDb" id="9606-ENSP00000268876"/>
<dbReference type="PeptideAtlas" id="Q8IWX7"/>
<dbReference type="ProteomicsDB" id="70922">
    <molecule id="Q8IWX7-1"/>
</dbReference>
<dbReference type="ProteomicsDB" id="70923">
    <molecule id="Q8IWX7-2"/>
</dbReference>
<dbReference type="ProteomicsDB" id="70924">
    <molecule id="Q8IWX7-3"/>
</dbReference>
<dbReference type="Pumba" id="Q8IWX7"/>
<dbReference type="Antibodypedia" id="2894">
    <property type="antibodies" value="159 antibodies from 27 providers"/>
</dbReference>
<dbReference type="DNASU" id="146862"/>
<dbReference type="Ensembl" id="ENST00000268876.9">
    <molecule id="Q8IWX7-1"/>
    <property type="protein sequence ID" value="ENSP00000268876.4"/>
    <property type="gene ID" value="ENSG00000141161.12"/>
</dbReference>
<dbReference type="Ensembl" id="ENST00000394570.7">
    <molecule id="Q8IWX7-3"/>
    <property type="protein sequence ID" value="ENSP00000378071.2"/>
    <property type="gene ID" value="ENSG00000141161.12"/>
</dbReference>
<dbReference type="Ensembl" id="ENST00000591048.2">
    <molecule id="Q8IWX7-2"/>
    <property type="protein sequence ID" value="ENSP00000468335.1"/>
    <property type="gene ID" value="ENSG00000141161.12"/>
</dbReference>
<dbReference type="GeneID" id="146862"/>
<dbReference type="KEGG" id="hsa:146862"/>
<dbReference type="MANE-Select" id="ENST00000394570.7">
    <molecule id="Q8IWX7-3"/>
    <property type="protein sequence ID" value="ENSP00000378071.2"/>
    <property type="RefSeq nucleotide sequence ID" value="NM_001267052.2"/>
    <property type="RefSeq protein sequence ID" value="NP_001253981.1"/>
</dbReference>
<dbReference type="UCSC" id="uc002hja.3">
    <molecule id="Q8IWX7-1"/>
    <property type="organism name" value="human"/>
</dbReference>
<dbReference type="AGR" id="HGNC:14304"/>
<dbReference type="CTD" id="146862"/>
<dbReference type="DisGeNET" id="146862"/>
<dbReference type="GeneCards" id="UNC45B"/>
<dbReference type="HGNC" id="HGNC:14304">
    <property type="gene designation" value="UNC45B"/>
</dbReference>
<dbReference type="HPA" id="ENSG00000141161">
    <property type="expression patterns" value="Group enriched (heart muscle, skeletal muscle, tongue)"/>
</dbReference>
<dbReference type="MalaCards" id="UNC45B"/>
<dbReference type="MIM" id="611220">
    <property type="type" value="gene"/>
</dbReference>
<dbReference type="MIM" id="616279">
    <property type="type" value="phenotype"/>
</dbReference>
<dbReference type="MIM" id="619178">
    <property type="type" value="phenotype"/>
</dbReference>
<dbReference type="neXtProt" id="NX_Q8IWX7"/>
<dbReference type="OpenTargets" id="ENSG00000141161"/>
<dbReference type="Orphanet" id="98991">
    <property type="disease" value="Early-onset nuclear cataract"/>
</dbReference>
<dbReference type="Orphanet" id="441447">
    <property type="disease" value="Early-onset posterior subcapsular cataract"/>
</dbReference>
<dbReference type="PharmGKB" id="PA26655"/>
<dbReference type="VEuPathDB" id="HostDB:ENSG00000141161"/>
<dbReference type="eggNOG" id="KOG4151">
    <property type="taxonomic scope" value="Eukaryota"/>
</dbReference>
<dbReference type="GeneTree" id="ENSGT00940000157654"/>
<dbReference type="HOGENOM" id="CLU_007331_0_0_1"/>
<dbReference type="InParanoid" id="Q8IWX7"/>
<dbReference type="OMA" id="DTQTRRW"/>
<dbReference type="OrthoDB" id="199930at2759"/>
<dbReference type="PAN-GO" id="Q8IWX7">
    <property type="GO annotations" value="3 GO annotations based on evolutionary models"/>
</dbReference>
<dbReference type="PhylomeDB" id="Q8IWX7"/>
<dbReference type="TreeFam" id="TF314096"/>
<dbReference type="PathwayCommons" id="Q8IWX7"/>
<dbReference type="SignaLink" id="Q8IWX7"/>
<dbReference type="BioGRID-ORCS" id="146862">
    <property type="hits" value="14 hits in 1144 CRISPR screens"/>
</dbReference>
<dbReference type="ChiTaRS" id="UNC45B">
    <property type="organism name" value="human"/>
</dbReference>
<dbReference type="GenomeRNAi" id="146862"/>
<dbReference type="Pharos" id="Q8IWX7">
    <property type="development level" value="Tbio"/>
</dbReference>
<dbReference type="PRO" id="PR:Q8IWX7"/>
<dbReference type="Proteomes" id="UP000005640">
    <property type="component" value="Chromosome 17"/>
</dbReference>
<dbReference type="RNAct" id="Q8IWX7">
    <property type="molecule type" value="protein"/>
</dbReference>
<dbReference type="Bgee" id="ENSG00000141161">
    <property type="expression patterns" value="Expressed in left ventricle myocardium and 82 other cell types or tissues"/>
</dbReference>
<dbReference type="GO" id="GO:0031672">
    <property type="term" value="C:A band"/>
    <property type="evidence" value="ECO:0007669"/>
    <property type="project" value="UniProtKB-SubCell"/>
</dbReference>
<dbReference type="GO" id="GO:0005737">
    <property type="term" value="C:cytoplasm"/>
    <property type="evidence" value="ECO:0000318"/>
    <property type="project" value="GO_Central"/>
</dbReference>
<dbReference type="GO" id="GO:0005829">
    <property type="term" value="C:cytosol"/>
    <property type="evidence" value="ECO:0007669"/>
    <property type="project" value="UniProtKB-SubCell"/>
</dbReference>
<dbReference type="GO" id="GO:0048471">
    <property type="term" value="C:perinuclear region of cytoplasm"/>
    <property type="evidence" value="ECO:0007669"/>
    <property type="project" value="UniProtKB-SubCell"/>
</dbReference>
<dbReference type="GO" id="GO:0030018">
    <property type="term" value="C:Z disc"/>
    <property type="evidence" value="ECO:0007669"/>
    <property type="project" value="UniProtKB-SubCell"/>
</dbReference>
<dbReference type="GO" id="GO:0051879">
    <property type="term" value="F:Hsp90 protein binding"/>
    <property type="evidence" value="ECO:0000318"/>
    <property type="project" value="GO_Central"/>
</dbReference>
<dbReference type="GO" id="GO:0030154">
    <property type="term" value="P:cell differentiation"/>
    <property type="evidence" value="ECO:0007669"/>
    <property type="project" value="UniProtKB-KW"/>
</dbReference>
<dbReference type="GO" id="GO:0061077">
    <property type="term" value="P:chaperone-mediated protein folding"/>
    <property type="evidence" value="ECO:0000318"/>
    <property type="project" value="GO_Central"/>
</dbReference>
<dbReference type="GO" id="GO:0002088">
    <property type="term" value="P:lens development in camera-type eye"/>
    <property type="evidence" value="ECO:0000250"/>
    <property type="project" value="UniProtKB"/>
</dbReference>
<dbReference type="GO" id="GO:0007517">
    <property type="term" value="P:muscle organ development"/>
    <property type="evidence" value="ECO:0007669"/>
    <property type="project" value="UniProtKB-KW"/>
</dbReference>
<dbReference type="FunFam" id="1.25.10.10:FF:000043">
    <property type="entry name" value="Unc-45 myosin chaperone B"/>
    <property type="match status" value="1"/>
</dbReference>
<dbReference type="FunFam" id="1.25.10.10:FF:000153">
    <property type="entry name" value="Unc-45 myosin chaperone B"/>
    <property type="match status" value="1"/>
</dbReference>
<dbReference type="FunFam" id="1.25.40.10:FF:000025">
    <property type="entry name" value="Unc-45 myosin chaperone B"/>
    <property type="match status" value="1"/>
</dbReference>
<dbReference type="Gene3D" id="1.25.10.10">
    <property type="entry name" value="Leucine-rich Repeat Variant"/>
    <property type="match status" value="2"/>
</dbReference>
<dbReference type="Gene3D" id="1.25.40.10">
    <property type="entry name" value="Tetratricopeptide repeat domain"/>
    <property type="match status" value="1"/>
</dbReference>
<dbReference type="InterPro" id="IPR011989">
    <property type="entry name" value="ARM-like"/>
</dbReference>
<dbReference type="InterPro" id="IPR016024">
    <property type="entry name" value="ARM-type_fold"/>
</dbReference>
<dbReference type="InterPro" id="IPR000225">
    <property type="entry name" value="Armadillo"/>
</dbReference>
<dbReference type="InterPro" id="IPR011990">
    <property type="entry name" value="TPR-like_helical_dom_sf"/>
</dbReference>
<dbReference type="InterPro" id="IPR019734">
    <property type="entry name" value="TPR_rpt"/>
</dbReference>
<dbReference type="InterPro" id="IPR024660">
    <property type="entry name" value="UCS_central_dom"/>
</dbReference>
<dbReference type="PANTHER" id="PTHR45994">
    <property type="entry name" value="FI21225P1"/>
    <property type="match status" value="1"/>
</dbReference>
<dbReference type="PANTHER" id="PTHR45994:SF2">
    <property type="entry name" value="PROTEIN UNC-45 HOMOLOG B"/>
    <property type="match status" value="1"/>
</dbReference>
<dbReference type="Pfam" id="PF11701">
    <property type="entry name" value="UNC45-central"/>
    <property type="match status" value="1"/>
</dbReference>
<dbReference type="SMART" id="SM00185">
    <property type="entry name" value="ARM"/>
    <property type="match status" value="4"/>
</dbReference>
<dbReference type="SMART" id="SM00028">
    <property type="entry name" value="TPR"/>
    <property type="match status" value="3"/>
</dbReference>
<dbReference type="SUPFAM" id="SSF48371">
    <property type="entry name" value="ARM repeat"/>
    <property type="match status" value="2"/>
</dbReference>
<dbReference type="SUPFAM" id="SSF48452">
    <property type="entry name" value="TPR-like"/>
    <property type="match status" value="1"/>
</dbReference>
<dbReference type="PROSITE" id="PS50005">
    <property type="entry name" value="TPR"/>
    <property type="match status" value="3"/>
</dbReference>
<dbReference type="PROSITE" id="PS50293">
    <property type="entry name" value="TPR_REGION"/>
    <property type="match status" value="1"/>
</dbReference>
<organism>
    <name type="scientific">Homo sapiens</name>
    <name type="common">Human</name>
    <dbReference type="NCBI Taxonomy" id="9606"/>
    <lineage>
        <taxon>Eukaryota</taxon>
        <taxon>Metazoa</taxon>
        <taxon>Chordata</taxon>
        <taxon>Craniata</taxon>
        <taxon>Vertebrata</taxon>
        <taxon>Euteleostomi</taxon>
        <taxon>Mammalia</taxon>
        <taxon>Eutheria</taxon>
        <taxon>Euarchontoglires</taxon>
        <taxon>Primates</taxon>
        <taxon>Haplorrhini</taxon>
        <taxon>Catarrhini</taxon>
        <taxon>Hominidae</taxon>
        <taxon>Homo</taxon>
    </lineage>
</organism>
<reference key="1">
    <citation type="journal article" date="2002" name="J. Cell Sci.">
        <title>Two mammalian UNC-45 isoforms are related to distinct cytoskeletal and muscle-specific functions.</title>
        <authorList>
            <person name="Price M.G."/>
            <person name="Landsverk M.L."/>
            <person name="Barral J.M."/>
            <person name="Epstein H.F."/>
        </authorList>
    </citation>
    <scope>NUCLEOTIDE SEQUENCE [MRNA] (ISOFORM 1)</scope>
    <source>
        <tissue>Heart</tissue>
    </source>
</reference>
<reference key="2">
    <citation type="journal article" date="2004" name="Genome Res.">
        <title>The status, quality, and expansion of the NIH full-length cDNA project: the Mammalian Gene Collection (MGC).</title>
        <authorList>
            <consortium name="The MGC Project Team"/>
        </authorList>
    </citation>
    <scope>NUCLEOTIDE SEQUENCE [LARGE SCALE MRNA] (ISOFORMS 2 AND 3)</scope>
    <scope>VARIANT ILE-60</scope>
</reference>
<reference key="3">
    <citation type="journal article" date="2007" name="Nat. Cell Biol.">
        <title>The ubiquitin-selective chaperone CDC-48/p97 links myosin assembly to human myopathy.</title>
        <authorList>
            <person name="Janiesch P.C."/>
            <person name="Kim J."/>
            <person name="Mouysset J."/>
            <person name="Barikbin R."/>
            <person name="Lochmueller H."/>
            <person name="Cassata G."/>
            <person name="Krause S."/>
            <person name="Hoppe T."/>
        </authorList>
    </citation>
    <scope>INTERACTION WITH UBE4B</scope>
</reference>
<reference key="4">
    <citation type="journal article" date="2006" name="Science">
        <title>The consensus coding sequences of human breast and colorectal cancers.</title>
        <authorList>
            <person name="Sjoeblom T."/>
            <person name="Jones S."/>
            <person name="Wood L.D."/>
            <person name="Parsons D.W."/>
            <person name="Lin J."/>
            <person name="Barber T.D."/>
            <person name="Mandelker D."/>
            <person name="Leary R.J."/>
            <person name="Ptak J."/>
            <person name="Silliman N."/>
            <person name="Szabo S."/>
            <person name="Buckhaults P."/>
            <person name="Farrell C."/>
            <person name="Meeh P."/>
            <person name="Markowitz S.D."/>
            <person name="Willis J."/>
            <person name="Dawson D."/>
            <person name="Willson J.K.V."/>
            <person name="Gazdar A.F."/>
            <person name="Hartigan J."/>
            <person name="Wu L."/>
            <person name="Liu C."/>
            <person name="Parmigiani G."/>
            <person name="Park B.H."/>
            <person name="Bachman K.E."/>
            <person name="Papadopoulos N."/>
            <person name="Vogelstein B."/>
            <person name="Kinzler K.W."/>
            <person name="Velculescu V.E."/>
        </authorList>
    </citation>
    <scope>VARIANT [LARGE SCALE ANALYSIS] HIS-496</scope>
</reference>
<reference key="5">
    <citation type="journal article" date="2014" name="Eur. J. Hum. Genet.">
        <title>The myosin chaperone UNC45B is involved in lens development and autosomal dominant juvenile cataract.</title>
        <authorList>
            <person name="Hansen L."/>
            <person name="Comyn S."/>
            <person name="Mang Y."/>
            <person name="Lind-Thomsen A."/>
            <person name="Myhre L."/>
            <person name="Jean F."/>
            <person name="Eiberg H."/>
            <person name="Tommerup N."/>
            <person name="Rosenberg T."/>
            <person name="Pilgrim D."/>
        </authorList>
    </citation>
    <scope>INVOLVEMENT IN CTRCT43</scope>
    <scope>VARIANT CTRCT43 TRP-805</scope>
    <scope>TISSUE SPECIFICITY</scope>
    <scope>DEVELOPMENTAL STAGE</scope>
</reference>
<reference key="6">
    <citation type="journal article" date="2019" name="Acta Neuropathol. Commun.">
        <title>Bi-allelic mutations in uncoordinated mutant number-45 myosin chaperone B are a cause for congenital myopathy.</title>
        <authorList>
            <person name="Dafsari H.S."/>
            <person name="Kocaturk N.M."/>
            <person name="Daimagueler H.S."/>
            <person name="Brunn A."/>
            <person name="Doetsch J."/>
            <person name="Weis J."/>
            <person name="Deckert M."/>
            <person name="Cirak S."/>
        </authorList>
    </citation>
    <scope>VARIANT MFM11 GLN-754</scope>
</reference>
<reference key="7">
    <citation type="journal article" date="2020" name="Am. J. Hum. Genet.">
        <title>Pathogenic Variants in the Myosin Chaperone UNC-45B Cause Progressive Myopathy with Eccentric Cores.</title>
        <authorList>
            <person name="Donkervoort S."/>
            <person name="Kutzner C.E."/>
            <person name="Hu Y."/>
            <person name="Lornage X."/>
            <person name="Rendu J."/>
            <person name="Stojkovic T."/>
            <person name="Baets J."/>
            <person name="Neuhaus S.B."/>
            <person name="Tanboon J."/>
            <person name="Maroofian R."/>
            <person name="Bolduc V."/>
            <person name="Mroczek M."/>
            <person name="Conijn S."/>
            <person name="Kuntz N.L."/>
            <person name="Toepf A."/>
            <person name="Monges S."/>
            <person name="Lubieniecki F."/>
            <person name="McCarty R.M."/>
            <person name="Chao K.R."/>
            <person name="Governali S."/>
            <person name="Boehm J."/>
            <person name="Boonyapisit K."/>
            <person name="Malfatti E."/>
            <person name="Sangruchi T."/>
            <person name="Horkayne-Szakaly I."/>
            <person name="Hedberg-Oldfors C."/>
            <person name="Efthymiou S."/>
            <person name="Noguchi S."/>
            <person name="Djeddi S."/>
            <person name="Iida A."/>
            <person name="di Rosa G."/>
            <person name="Fiorillo C."/>
            <person name="Salpietro V."/>
            <person name="Darin N."/>
            <person name="Faure J."/>
            <person name="Houlden H."/>
            <person name="Oldfors A."/>
            <person name="Nishino I."/>
            <person name="de Ridder W."/>
            <person name="Straub V."/>
            <person name="Pokrzywa W."/>
            <person name="Laporte J."/>
            <person name="Foley A.R."/>
            <person name="Romero N.B."/>
            <person name="Ottenheijm C."/>
            <person name="Hoppe T."/>
            <person name="Boennemann C.G."/>
        </authorList>
    </citation>
    <scope>VARIANTS MFM11 PRO-403; ARG-514 AND GLN-754</scope>
    <scope>CHARACTERIZATION OF VARIANTS MFM11 PRO-403; ARG-514 AND GLN-754</scope>
    <scope>SUBCELLULAR LOCATION</scope>
    <scope>TISSUE SPECIFICITY</scope>
</reference>
<protein>
    <recommendedName>
        <fullName evidence="10">Protein unc-45 homolog B</fullName>
        <shortName>Unc-45B</shortName>
    </recommendedName>
    <alternativeName>
        <fullName>SMUNC45</fullName>
    </alternativeName>
</protein>
<proteinExistence type="evidence at protein level"/>
<comment type="function">
    <text evidence="1 2">Acts as a co-chaperone for HSP90 and is required for proper folding of the myosin motor domain. Plays a role in sarcomere formation during muscle cell development. Is necessary for normal early lens development.</text>
</comment>
<comment type="subunit">
    <text evidence="2 5">Interacts with HSP90 in an ATP-independent manner (By similarity). Interacts with UBE4B; the interaction may target UNC45B for proteasomal degradation (PubMed:17369820).</text>
</comment>
<comment type="interaction">
    <interactant intactId="EBI-9363363">
        <id>Q8IWX7</id>
    </interactant>
    <interactant intactId="EBI-296047">
        <id>P07900</id>
        <label>HSP90AA1</label>
    </interactant>
    <organismsDiffer>false</organismsDiffer>
    <experiments>3</experiments>
</comment>
<comment type="interaction">
    <interactant intactId="EBI-9363363">
        <id>Q8IWX7</id>
    </interactant>
    <interactant intactId="EBI-352572">
        <id>P08238</id>
        <label>HSP90AB1</label>
    </interactant>
    <organismsDiffer>false</organismsDiffer>
    <experiments>4</experiments>
</comment>
<comment type="subcellular location">
    <subcellularLocation>
        <location evidence="1">Cytoplasm</location>
        <location evidence="1">Myofibril</location>
        <location evidence="1">Sarcomere</location>
        <location evidence="1">Z line</location>
    </subcellularLocation>
    <subcellularLocation>
        <location evidence="8">Cytoplasm</location>
        <location evidence="8">Myofibril</location>
        <location evidence="8">Sarcomere</location>
        <location evidence="8">A band</location>
    </subcellularLocation>
    <subcellularLocation>
        <location evidence="1">Cytoplasm</location>
        <location evidence="1">Perinuclear region</location>
    </subcellularLocation>
    <subcellularLocation>
        <location evidence="2">Cytoplasm</location>
        <location evidence="2">Cytosol</location>
    </subcellularLocation>
    <text evidence="1">Expressed at the Z line and in the perinuclear region of myofibrils. Translocates to the A band in response to stress conditions and fibril damage.</text>
</comment>
<comment type="alternative products">
    <event type="alternative splicing"/>
    <isoform>
        <id>Q8IWX7-1</id>
        <name>1</name>
        <sequence type="displayed"/>
    </isoform>
    <isoform>
        <id>Q8IWX7-2</id>
        <name>2</name>
        <sequence type="described" ref="VSP_020586"/>
    </isoform>
    <isoform>
        <id>Q8IWX7-3</id>
        <name>3</name>
        <sequence type="described" ref="VSP_020587"/>
    </isoform>
</comment>
<comment type="tissue specificity">
    <text evidence="6 8">Expressed in eye lens tissues. Expressed in muscle (at protein level) (PubMed:33217308).</text>
</comment>
<comment type="developmental stage">
    <text evidence="6">Expressed from 43-day and 54-day embryonic eye development.</text>
</comment>
<comment type="disease" evidence="6">
    <disease id="DI-04361">
        <name>Cataract 43</name>
        <acronym>CTRCT43</acronym>
        <description>An opacification of the crystalline lens of the eye that frequently results in visual impairment or blindness. Opacities vary in morphology, are often confined to a portion of the lens, and may be static or progressive. In general, the more posteriorly located and dense an opacity, the greater the impact on visual function.</description>
        <dbReference type="MIM" id="616279"/>
    </disease>
    <text>The disease is caused by variants affecting the gene represented in this entry.</text>
</comment>
<comment type="disease" evidence="7 8">
    <disease id="DI-06043">
        <name>Myopathy, myofibrillar, 11</name>
        <acronym>MFM11</acronym>
        <description>A form of myofibrillar myopathy, a group of chronic neuromuscular disorders characterized at ultrastructural level by disintegration of the sarcomeric Z disk and myofibrils, and replacement of the normal myofibrillar markings by small dense granules, or larger hyaline masses, or amorphous material. MFM11 is an autosomal recessive form characterized by onset of slowly progressive proximal muscle weakness in the first decade of life. More variable features may include decreased respiratory forced vital capacity, variable cardiac features, and calf hypertrophy. Skeletal muscle biopsy shows myopathic changes with variation in fiber size, type 1 fiber predominance, centralized nuclei, eccentrically placed core-like lesions, and distortion of the myofibrillary pattern with Z-line streaming and abnormal myofibrillar aggregates or inclusions.</description>
        <dbReference type="MIM" id="619178"/>
    </disease>
    <text>The disease is caused by variants affecting the gene represented in this entry.</text>
</comment>
<evidence type="ECO:0000250" key="1">
    <source>
        <dbReference type="UniProtKB" id="Q6DGE9"/>
    </source>
</evidence>
<evidence type="ECO:0000250" key="2">
    <source>
        <dbReference type="UniProtKB" id="Q8CGY6"/>
    </source>
</evidence>
<evidence type="ECO:0000269" key="3">
    <source>
    </source>
</evidence>
<evidence type="ECO:0000269" key="4">
    <source>
    </source>
</evidence>
<evidence type="ECO:0000269" key="5">
    <source>
    </source>
</evidence>
<evidence type="ECO:0000269" key="6">
    <source>
    </source>
</evidence>
<evidence type="ECO:0000269" key="7">
    <source>
    </source>
</evidence>
<evidence type="ECO:0000269" key="8">
    <source>
    </source>
</evidence>
<evidence type="ECO:0000303" key="9">
    <source>
    </source>
</evidence>
<evidence type="ECO:0000305" key="10"/>
<evidence type="ECO:0000312" key="11">
    <source>
        <dbReference type="HGNC" id="HGNC:14304"/>
    </source>
</evidence>
<name>UN45B_HUMAN</name>
<feature type="chain" id="PRO_0000249892" description="Protein unc-45 homolog B">
    <location>
        <begin position="1"/>
        <end position="931"/>
    </location>
</feature>
<feature type="repeat" description="TPR 1">
    <location>
        <begin position="6"/>
        <end position="39"/>
    </location>
</feature>
<feature type="repeat" description="TPR 2">
    <location>
        <begin position="43"/>
        <end position="76"/>
    </location>
</feature>
<feature type="repeat" description="TPR 3">
    <location>
        <begin position="77"/>
        <end position="110"/>
    </location>
</feature>
<feature type="repeat" description="ARM 1">
    <location>
        <begin position="169"/>
        <end position="208"/>
    </location>
</feature>
<feature type="repeat" description="ARM 2">
    <location>
        <begin position="211"/>
        <end position="250"/>
    </location>
</feature>
<feature type="repeat" description="ARM 3">
    <location>
        <begin position="751"/>
        <end position="790"/>
    </location>
</feature>
<feature type="splice variant" id="VSP_020586" description="In isoform 2." evidence="9">
    <location>
        <begin position="485"/>
        <end position="565"/>
    </location>
</feature>
<feature type="splice variant" id="VSP_020587" description="In isoform 3." evidence="9">
    <location>
        <begin position="564"/>
        <end position="565"/>
    </location>
</feature>
<feature type="sequence variant" id="VAR_027506" description="In dbSNP:rs16970659." evidence="3">
    <original>V</original>
    <variation>I</variation>
    <location>
        <position position="60"/>
    </location>
</feature>
<feature type="sequence variant" id="VAR_052630" description="In dbSNP:rs35749208.">
    <original>A</original>
    <variation>V</variation>
    <location>
        <position position="199"/>
    </location>
</feature>
<feature type="sequence variant" id="VAR_052631" description="In dbSNP:rs41389545.">
    <original>K</original>
    <variation>R</variation>
    <location>
        <position position="377"/>
    </location>
</feature>
<feature type="sequence variant" id="VAR_085393" description="In MFM11; mislocated away from the A-band to the Z-disk; dbSNP:rs2092154042." evidence="8">
    <original>S</original>
    <variation>P</variation>
    <location>
        <position position="403"/>
    </location>
</feature>
<feature type="sequence variant" id="VAR_035870" description="In a breast cancer sample; somatic mutation." evidence="4">
    <original>D</original>
    <variation>H</variation>
    <location>
        <position position="496"/>
    </location>
</feature>
<feature type="sequence variant" id="VAR_085394" description="In MFM11; uncertain significance; mislocated away from the A-band to the Z-disk; dbSNP:rs775340790." evidence="8">
    <original>C</original>
    <variation>R</variation>
    <location>
        <position position="514"/>
    </location>
</feature>
<feature type="sequence variant" id="VAR_085395" description="In MFM11; mislocated away from the A-band to the Z-disk; dbSNP:rs139715157." evidence="7 8">
    <original>R</original>
    <variation>Q</variation>
    <location>
        <position position="754"/>
    </location>
</feature>
<feature type="sequence variant" id="VAR_073375" description="In CTRCT43; dbSNP:rs370424081." evidence="6">
    <original>R</original>
    <variation>W</variation>
    <location>
        <position position="805"/>
    </location>
</feature>
<feature type="sequence variant" id="VAR_027507" description="In dbSNP:rs11654824.">
    <original>I</original>
    <variation>N</variation>
    <location>
        <position position="852"/>
    </location>
</feature>
<sequence length="931" mass="103733">MAEVEAVQLKEEGNRHFQLQDYKAATNSYSQALKLTKDKALLATLYRNRAACGLKTESYVQAASDASRAIDINSSDIKALYRRCQALEHLGKLDQAFKDVQRCATLEPRNQNFQEMLRRLNTSIQEKLRVQFSTDSRVQKMFEILLDENSEADKREKAANNLIVLGREEAGAEKIFQNNGVALLLQLLDTKKPELVLAAVRTLSGMCSGHQARATVILHAVRIDRICSLMAVENEEMSLAVCNLLQAIIDSLSGEDKREHRGKEEALVLDTKKDLKQITSHLLDMLVSKKVSGQGRDQALNLLNKNVPRKDLAIHDNSRTIYVVDNGLRKILKVVGQVPDLPSCLPLTDNTRMLASILINKLYDDLRCDPERDHFRKICEEYITGKFDPQDMDKNLNAIQTVSGILQGPFDLGNQLLGLKGVMEMMVALCGSERETDQLVAVEALIHASTKLSRATFIITNGVSLLKQIYKTTKNEKIKIRTLVGLCKLGSAGGTDYGLRQFAEGSTEKLAKQCRKWLCNMSIDTRTRRWAVEGLAYLTLDADVKDDFVQDVPALQAMFELAKAGTSDKTILYSVATTLVNCTNSYDVKEVIPELVQLAKFSKQHVPEEHPKDKKDFIDMRVKRLLKAGVISALACMVKADSAILTDQTKELLARVFLALCDNPKDRGTIVAQGGGKALIPLALEGTDVGKVKAAHALAKIAAVSNPDIAFPGERVYEVVRPLVRLLDTQRDGLQNYEALLGLTNLSGRSDKLRQKIFKERALPDIENYMFENHDQLRQAATECMCNMVLHKEVQERFLADGNDRLKLVVLLCGEDDDKVQNAAAGALAMLTAAHKKLCLKMTQVTTQWLEILQRLCLHDQLSVQHRGLVIAYNLLAADAELAKKLVESELLEILTVVGKQEPDEKKAEVVQTARECLIKCMDYGFIKPVS</sequence>
<accession>Q8IWX7</accession>
<accession>Q495Q8</accession>
<accession>Q495Q9</accession>
<keyword id="KW-0025">Alternative splicing</keyword>
<keyword id="KW-0898">Cataract</keyword>
<keyword id="KW-0143">Chaperone</keyword>
<keyword id="KW-0963">Cytoplasm</keyword>
<keyword id="KW-0217">Developmental protein</keyword>
<keyword id="KW-0221">Differentiation</keyword>
<keyword id="KW-0225">Disease variant</keyword>
<keyword id="KW-1060">Myofibrillar myopathy</keyword>
<keyword id="KW-0517">Myogenesis</keyword>
<keyword id="KW-1267">Proteomics identification</keyword>
<keyword id="KW-1185">Reference proteome</keyword>
<keyword id="KW-0677">Repeat</keyword>
<keyword id="KW-0802">TPR repeat</keyword>
<gene>
    <name evidence="11" type="primary">UNC45B</name>
    <name type="synonym">CMYA4</name>
    <name type="synonym">UNC45</name>
</gene>